<feature type="chain" id="PRO_0000334319" description="Na(+)/H(+) antiporter NhaA 2">
    <location>
        <begin position="1"/>
        <end position="444"/>
    </location>
</feature>
<feature type="transmembrane region" description="Helical" evidence="1">
    <location>
        <begin position="21"/>
        <end position="41"/>
    </location>
</feature>
<feature type="transmembrane region" description="Helical" evidence="1">
    <location>
        <begin position="64"/>
        <end position="84"/>
    </location>
</feature>
<feature type="transmembrane region" description="Helical" evidence="1">
    <location>
        <begin position="102"/>
        <end position="122"/>
    </location>
</feature>
<feature type="transmembrane region" description="Helical" evidence="1">
    <location>
        <begin position="131"/>
        <end position="151"/>
    </location>
</feature>
<feature type="transmembrane region" description="Helical" evidence="1">
    <location>
        <begin position="160"/>
        <end position="180"/>
    </location>
</feature>
<feature type="transmembrane region" description="Helical" evidence="1">
    <location>
        <begin position="185"/>
        <end position="205"/>
    </location>
</feature>
<feature type="transmembrane region" description="Helical" evidence="1">
    <location>
        <begin position="212"/>
        <end position="232"/>
    </location>
</feature>
<feature type="transmembrane region" description="Helical" evidence="1">
    <location>
        <begin position="307"/>
        <end position="327"/>
    </location>
</feature>
<feature type="transmembrane region" description="Helical" evidence="1">
    <location>
        <begin position="342"/>
        <end position="362"/>
    </location>
</feature>
<feature type="transmembrane region" description="Helical" evidence="1">
    <location>
        <begin position="377"/>
        <end position="397"/>
    </location>
</feature>
<feature type="transmembrane region" description="Helical" evidence="1">
    <location>
        <begin position="413"/>
        <end position="433"/>
    </location>
</feature>
<comment type="function">
    <text evidence="1">Na(+)/H(+) antiporter that extrudes sodium in exchange for external protons.</text>
</comment>
<comment type="catalytic activity">
    <reaction evidence="1">
        <text>Na(+)(in) + 2 H(+)(out) = Na(+)(out) + 2 H(+)(in)</text>
        <dbReference type="Rhea" id="RHEA:29251"/>
        <dbReference type="ChEBI" id="CHEBI:15378"/>
        <dbReference type="ChEBI" id="CHEBI:29101"/>
    </reaction>
    <physiologicalReaction direction="left-to-right" evidence="1">
        <dbReference type="Rhea" id="RHEA:29252"/>
    </physiologicalReaction>
</comment>
<comment type="subcellular location">
    <subcellularLocation>
        <location evidence="1">Cell inner membrane</location>
        <topology evidence="1">Multi-pass membrane protein</topology>
    </subcellularLocation>
</comment>
<comment type="similarity">
    <text evidence="1">Belongs to the NhaA Na(+)/H(+) (TC 2.A.33) antiporter family.</text>
</comment>
<sequence>MAAKQNRISEALSSFIRAESFSGIFLFFCAVSAMIVANSPFSDIYKNFWEQPFGFSFAGGFYGFSIHDWINDVLMSIFFLMVGLEIKRELLFGDLSGFQKAAFPVIGAVGGMIVPGVIYYVLNMNTPSYHGFGIPMATDIAFALGVILLLGKRVPLALKVFLVTLAVADDLGAIVVIAVFYPSPEGLHFIYLGVAAGLLILLTGINHLGVRHLGVYIGIGILLWFCVHHSGIHATIAAVALAFCIPVKPKIESKEFIQVVQQMIEIFESKDKERKNILLDTQQMSAIDEAGRDFAKVQNPLLRLEHALQPLCAFIIMPLFAFANAGVDIRAEVNFHIDHIMLGVILGLVVGKPLGILSLTFLCEKCKIASRPAGVSWSHIFGAGMLAGIGFTMSMFVSNLAFDAPQASDVSKIAILLASSIAGIVGSLYLIINYKINSRAKVKS</sequence>
<organism>
    <name type="scientific">Helicobacter hepaticus (strain ATCC 51449 / 3B1)</name>
    <dbReference type="NCBI Taxonomy" id="235279"/>
    <lineage>
        <taxon>Bacteria</taxon>
        <taxon>Pseudomonadati</taxon>
        <taxon>Campylobacterota</taxon>
        <taxon>Epsilonproteobacteria</taxon>
        <taxon>Campylobacterales</taxon>
        <taxon>Helicobacteraceae</taxon>
        <taxon>Helicobacter</taxon>
    </lineage>
</organism>
<gene>
    <name evidence="1" type="primary">nhaA2</name>
    <name type="ordered locus">HH_1645</name>
</gene>
<proteinExistence type="inferred from homology"/>
<keyword id="KW-0050">Antiport</keyword>
<keyword id="KW-0997">Cell inner membrane</keyword>
<keyword id="KW-1003">Cell membrane</keyword>
<keyword id="KW-0406">Ion transport</keyword>
<keyword id="KW-0472">Membrane</keyword>
<keyword id="KW-1185">Reference proteome</keyword>
<keyword id="KW-0915">Sodium</keyword>
<keyword id="KW-0739">Sodium transport</keyword>
<keyword id="KW-0812">Transmembrane</keyword>
<keyword id="KW-1133">Transmembrane helix</keyword>
<keyword id="KW-0813">Transport</keyword>
<dbReference type="EMBL" id="AE017125">
    <property type="protein sequence ID" value="AAP78242.1"/>
    <property type="molecule type" value="Genomic_DNA"/>
</dbReference>
<dbReference type="RefSeq" id="WP_011116485.1">
    <property type="nucleotide sequence ID" value="NC_004917.1"/>
</dbReference>
<dbReference type="SMR" id="Q7VFN0"/>
<dbReference type="STRING" id="235279.HH_1645"/>
<dbReference type="KEGG" id="hhe:HH_1645"/>
<dbReference type="eggNOG" id="COG3004">
    <property type="taxonomic scope" value="Bacteria"/>
</dbReference>
<dbReference type="HOGENOM" id="CLU_015803_1_2_7"/>
<dbReference type="OrthoDB" id="9808135at2"/>
<dbReference type="Proteomes" id="UP000002495">
    <property type="component" value="Chromosome"/>
</dbReference>
<dbReference type="GO" id="GO:0005886">
    <property type="term" value="C:plasma membrane"/>
    <property type="evidence" value="ECO:0007669"/>
    <property type="project" value="UniProtKB-SubCell"/>
</dbReference>
<dbReference type="GO" id="GO:0015385">
    <property type="term" value="F:sodium:proton antiporter activity"/>
    <property type="evidence" value="ECO:0007669"/>
    <property type="project" value="TreeGrafter"/>
</dbReference>
<dbReference type="GO" id="GO:0006885">
    <property type="term" value="P:regulation of pH"/>
    <property type="evidence" value="ECO:0007669"/>
    <property type="project" value="InterPro"/>
</dbReference>
<dbReference type="Gene3D" id="1.20.1530.10">
    <property type="entry name" value="Na+/H+ antiporter like domain"/>
    <property type="match status" value="1"/>
</dbReference>
<dbReference type="HAMAP" id="MF_01844">
    <property type="entry name" value="NhaA"/>
    <property type="match status" value="1"/>
</dbReference>
<dbReference type="InterPro" id="IPR023171">
    <property type="entry name" value="Na/H_antiporter_dom_sf"/>
</dbReference>
<dbReference type="InterPro" id="IPR004670">
    <property type="entry name" value="NhaA"/>
</dbReference>
<dbReference type="NCBIfam" id="TIGR00773">
    <property type="entry name" value="NhaA"/>
    <property type="match status" value="1"/>
</dbReference>
<dbReference type="NCBIfam" id="NF011428">
    <property type="entry name" value="PRK14856.1"/>
    <property type="match status" value="1"/>
</dbReference>
<dbReference type="PANTHER" id="PTHR30341:SF0">
    <property type="entry name" value="NA(+)_H(+) ANTIPORTER NHAA"/>
    <property type="match status" value="1"/>
</dbReference>
<dbReference type="PANTHER" id="PTHR30341">
    <property type="entry name" value="SODIUM ION/PROTON ANTIPORTER NHAA-RELATED"/>
    <property type="match status" value="1"/>
</dbReference>
<dbReference type="Pfam" id="PF06965">
    <property type="entry name" value="Na_H_antiport_1"/>
    <property type="match status" value="1"/>
</dbReference>
<reference key="1">
    <citation type="journal article" date="2003" name="Proc. Natl. Acad. Sci. U.S.A.">
        <title>The complete genome sequence of the carcinogenic bacterium Helicobacter hepaticus.</title>
        <authorList>
            <person name="Suerbaum S."/>
            <person name="Josenhans C."/>
            <person name="Sterzenbach T."/>
            <person name="Drescher B."/>
            <person name="Brandt P."/>
            <person name="Bell M."/>
            <person name="Droege M."/>
            <person name="Fartmann B."/>
            <person name="Fischer H.-P."/>
            <person name="Ge Z."/>
            <person name="Hoerster A."/>
            <person name="Holland R."/>
            <person name="Klein K."/>
            <person name="Koenig J."/>
            <person name="Macko L."/>
            <person name="Mendz G.L."/>
            <person name="Nyakatura G."/>
            <person name="Schauer D.B."/>
            <person name="Shen Z."/>
            <person name="Weber J."/>
            <person name="Frosch M."/>
            <person name="Fox J.G."/>
        </authorList>
    </citation>
    <scope>NUCLEOTIDE SEQUENCE [LARGE SCALE GENOMIC DNA]</scope>
    <source>
        <strain>ATCC 51449 / 3B1</strain>
    </source>
</reference>
<name>NHAA2_HELHP</name>
<evidence type="ECO:0000255" key="1">
    <source>
        <dbReference type="HAMAP-Rule" id="MF_01844"/>
    </source>
</evidence>
<accession>Q7VFN0</accession>
<protein>
    <recommendedName>
        <fullName evidence="1">Na(+)/H(+) antiporter NhaA 2</fullName>
    </recommendedName>
    <alternativeName>
        <fullName evidence="1">Sodium/proton antiporter NhaA 2</fullName>
    </alternativeName>
</protein>